<organism>
    <name type="scientific">Human cytomegalovirus (strain Merlin)</name>
    <name type="common">HHV-5</name>
    <name type="synonym">Human herpesvirus 5</name>
    <dbReference type="NCBI Taxonomy" id="295027"/>
    <lineage>
        <taxon>Viruses</taxon>
        <taxon>Duplodnaviria</taxon>
        <taxon>Heunggongvirae</taxon>
        <taxon>Peploviricota</taxon>
        <taxon>Herviviricetes</taxon>
        <taxon>Herpesvirales</taxon>
        <taxon>Orthoherpesviridae</taxon>
        <taxon>Betaherpesvirinae</taxon>
        <taxon>Cytomegalovirus</taxon>
        <taxon>Cytomegalovirus humanbeta5</taxon>
        <taxon>Human cytomegalovirus</taxon>
    </lineage>
</organism>
<accession>F5H8Q3</accession>
<protein>
    <recommendedName>
        <fullName>Membrane protein UL148</fullName>
    </recommendedName>
</protein>
<organismHost>
    <name type="scientific">Homo sapiens</name>
    <name type="common">Human</name>
    <dbReference type="NCBI Taxonomy" id="9606"/>
</organismHost>
<keyword id="KW-1038">Host endoplasmic reticulum</keyword>
<keyword id="KW-1043">Host membrane</keyword>
<keyword id="KW-0945">Host-virus interaction</keyword>
<keyword id="KW-1090">Inhibition of host innate immune response by virus</keyword>
<keyword id="KW-0472">Membrane</keyword>
<keyword id="KW-1185">Reference proteome</keyword>
<keyword id="KW-0732">Signal</keyword>
<keyword id="KW-0812">Transmembrane</keyword>
<keyword id="KW-1133">Transmembrane helix</keyword>
<keyword id="KW-0899">Viral immunoevasion</keyword>
<feature type="signal peptide" evidence="2">
    <location>
        <begin position="1"/>
        <end position="20"/>
    </location>
</feature>
<feature type="chain" id="PRO_0000418261" description="Membrane protein UL148">
    <location>
        <begin position="21"/>
        <end position="316"/>
    </location>
</feature>
<feature type="transmembrane region" description="Helical" evidence="2">
    <location>
        <begin position="286"/>
        <end position="308"/>
    </location>
</feature>
<reference key="1">
    <citation type="journal article" date="2004" name="J. Gen. Virol.">
        <title>Genetic content of wild-type human cytomegalovirus.</title>
        <authorList>
            <person name="Dolan A."/>
            <person name="Cunningham C."/>
            <person name="Hector R.D."/>
            <person name="Hassan-Walker A.F."/>
            <person name="Lee L."/>
            <person name="Addison C."/>
            <person name="Dargan D.J."/>
            <person name="McGeoch D.J."/>
            <person name="Gatherer D."/>
            <person name="Emery V.C."/>
            <person name="Griffiths P.D."/>
            <person name="Sinzger C."/>
            <person name="McSharry B.P."/>
            <person name="Wilkinson G.W.G."/>
            <person name="Davison A.J."/>
        </authorList>
    </citation>
    <scope>NUCLEOTIDE SEQUENCE [LARGE SCALE GENOMIC DNA]</scope>
</reference>
<gene>
    <name type="primary">UL148</name>
</gene>
<dbReference type="EMBL" id="AY446894">
    <property type="protein sequence ID" value="AAR31672.1"/>
    <property type="molecule type" value="Genomic_DNA"/>
</dbReference>
<dbReference type="RefSeq" id="YP_081568.1">
    <property type="nucleotide sequence ID" value="NC_006273.2"/>
</dbReference>
<dbReference type="DNASU" id="3077479"/>
<dbReference type="GeneID" id="3077479"/>
<dbReference type="KEGG" id="vg:3077479"/>
<dbReference type="Reactome" id="R-HSA-9610379">
    <property type="pathway name" value="HCMV Late Events"/>
</dbReference>
<dbReference type="Proteomes" id="UP000000938">
    <property type="component" value="Segment"/>
</dbReference>
<dbReference type="GO" id="GO:0044167">
    <property type="term" value="C:host cell endoplasmic reticulum membrane"/>
    <property type="evidence" value="ECO:0007669"/>
    <property type="project" value="UniProtKB-SubCell"/>
</dbReference>
<dbReference type="GO" id="GO:0016020">
    <property type="term" value="C:membrane"/>
    <property type="evidence" value="ECO:0007669"/>
    <property type="project" value="UniProtKB-KW"/>
</dbReference>
<dbReference type="GO" id="GO:0052170">
    <property type="term" value="P:symbiont-mediated suppression of host innate immune response"/>
    <property type="evidence" value="ECO:0007669"/>
    <property type="project" value="UniProtKB-KW"/>
</dbReference>
<sequence length="316" mass="36504">MLRLLFTLVLLALYGPSVDASRDYVHVRLLSYRGDPLVFKHTFSGVRRPFTELGWAACRDWDSMHCTPFWSTDLEQMTDSVRRYSTVSPGKEVTLQLHGNQTVQPSFLSFTCRLQLEPVVENVGLYVAYVVNDGERPQQFFTPQVDVVRFALYLETLSRIVEPLESGRLTVEFDTPDLALAPDLVSSLFVAGHGETDFYMNWTLRRSQTHYLEEMALQVEILKPRGVRHRAIIHHPKLQPGVGLWIDFCVYRYNARLTRGYVRYTLSPKARLPAKAEGWLVSLDRFIVQYLNTLLITMMAAIWARVLITYLVSRRR</sequence>
<name>UL148_HCMVM</name>
<comment type="function">
    <text evidence="1">Chaperone protein that plays an important role in HCMV tropism. Cooperates with UL116 to regulate the abundance of gH-gL complexes in virion. Favors the incorporation of gL into virions once UL116 has regulated the early folding steps of virion assembly. Interacts with the host ERAD machinery and slows gO decay which would otherwise be constitutively degraded. Reorganizes the host endoplasmic reticulum and activates the unfolded protein response. Additionally, plays a role in the evasion of antiviral immune response by down-regulating cell surface expression of host CD58. Mechanistically, interacts with host CD58 and retains its immature form intracellularly. The capacity to cause endoplasmic reticulum reorganization and the intracellular retention of host CD58 are functionally independent properties.</text>
</comment>
<comment type="subunit">
    <text evidence="1">Interacts with host SEL1L.</text>
</comment>
<comment type="subcellular location">
    <subcellularLocation>
        <location evidence="1">Host endoplasmic reticulum membrane</location>
        <topology evidence="1">Single-pass type I membrane protein</topology>
    </subcellularLocation>
</comment>
<proteinExistence type="inferred from homology"/>
<evidence type="ECO:0000250" key="1">
    <source>
        <dbReference type="UniProtKB" id="B8YEE5"/>
    </source>
</evidence>
<evidence type="ECO:0000255" key="2"/>